<organism>
    <name type="scientific">Shigella dysenteriae serotype 1 (strain Sd197)</name>
    <dbReference type="NCBI Taxonomy" id="300267"/>
    <lineage>
        <taxon>Bacteria</taxon>
        <taxon>Pseudomonadati</taxon>
        <taxon>Pseudomonadota</taxon>
        <taxon>Gammaproteobacteria</taxon>
        <taxon>Enterobacterales</taxon>
        <taxon>Enterobacteriaceae</taxon>
        <taxon>Shigella</taxon>
    </lineage>
</organism>
<sequence length="490" mass="52933">MTLWINGDWVTGQGALRVKRNPVSGEVLWQGNDADAAQVEQACRAARAAYPRWARLSFGDRQVRVERFAGLLESNKAELTAIIARETGKPRWEAATEVTAMINKIAISIKAYHVRTGEQRSEMPDGAASLRHRPHGVLAVFGPYNFPGHLPNGHIVPALLAGNTIIFKPSELTPWSGEAVMRLWQQAGLPPGVLNLVQGGRETGQALSALEDLDGLLFTGSANTGYQLHRQLSGQPEKILALEMGGNNPLIIDEVADIDAAVHLTIQSAFVTAGQRCTCARRLLLKSGAQGDAFLARLVAVSQRLTPGNWDDEPQPFIGGLISEQAAQQVVTAWQQLEAMGGRTLLAPRLFQAETSLLTPGIIEMTGVAGVPDEEVFGPLLRVWRCDTFDEAIRMANNTRFGLSCGLVSSEREKFDQLLLEARAGIVNWKKPLTGAASTAPFGGIGASGNHRPSAWYAADYCAWPMASLESDSLTLLAMLNPGLDFSDEV</sequence>
<proteinExistence type="inferred from homology"/>
<comment type="function">
    <text evidence="1">Catalyzes the NAD-dependent reduction of succinylglutamate semialdehyde into succinylglutamate.</text>
</comment>
<comment type="catalytic activity">
    <reaction evidence="1">
        <text>N-succinyl-L-glutamate 5-semialdehyde + NAD(+) + H2O = N-succinyl-L-glutamate + NADH + 2 H(+)</text>
        <dbReference type="Rhea" id="RHEA:10812"/>
        <dbReference type="ChEBI" id="CHEBI:15377"/>
        <dbReference type="ChEBI" id="CHEBI:15378"/>
        <dbReference type="ChEBI" id="CHEBI:57540"/>
        <dbReference type="ChEBI" id="CHEBI:57945"/>
        <dbReference type="ChEBI" id="CHEBI:58520"/>
        <dbReference type="ChEBI" id="CHEBI:58763"/>
        <dbReference type="EC" id="1.2.1.71"/>
    </reaction>
</comment>
<comment type="pathway">
    <text evidence="1">Amino-acid degradation; L-arginine degradation via AST pathway; L-glutamate and succinate from L-arginine: step 4/5.</text>
</comment>
<comment type="similarity">
    <text evidence="1">Belongs to the aldehyde dehydrogenase family. AstD subfamily.</text>
</comment>
<comment type="sequence caution" evidence="2">
    <conflict type="erroneous termination">
        <sequence resource="EMBL-CDS" id="ABB61667"/>
    </conflict>
    <text>Truncated C-terminus.</text>
</comment>
<evidence type="ECO:0000255" key="1">
    <source>
        <dbReference type="HAMAP-Rule" id="MF_01174"/>
    </source>
</evidence>
<evidence type="ECO:0000305" key="2"/>
<reference key="1">
    <citation type="journal article" date="2005" name="Nucleic Acids Res.">
        <title>Genome dynamics and diversity of Shigella species, the etiologic agents of bacillary dysentery.</title>
        <authorList>
            <person name="Yang F."/>
            <person name="Yang J."/>
            <person name="Zhang X."/>
            <person name="Chen L."/>
            <person name="Jiang Y."/>
            <person name="Yan Y."/>
            <person name="Tang X."/>
            <person name="Wang J."/>
            <person name="Xiong Z."/>
            <person name="Dong J."/>
            <person name="Xue Y."/>
            <person name="Zhu Y."/>
            <person name="Xu X."/>
            <person name="Sun L."/>
            <person name="Chen S."/>
            <person name="Nie H."/>
            <person name="Peng J."/>
            <person name="Xu J."/>
            <person name="Wang Y."/>
            <person name="Yuan Z."/>
            <person name="Wen Y."/>
            <person name="Yao Z."/>
            <person name="Shen Y."/>
            <person name="Qiang B."/>
            <person name="Hou Y."/>
            <person name="Yu J."/>
            <person name="Jin Q."/>
        </authorList>
    </citation>
    <scope>NUCLEOTIDE SEQUENCE [LARGE SCALE GENOMIC DNA]</scope>
    <source>
        <strain>Sd197</strain>
    </source>
</reference>
<accession>Q32G88</accession>
<protein>
    <recommendedName>
        <fullName evidence="1">N-succinylglutamate 5-semialdehyde dehydrogenase</fullName>
        <ecNumber evidence="1">1.2.1.71</ecNumber>
    </recommendedName>
    <alternativeName>
        <fullName evidence="1">Succinylglutamic semialdehyde dehydrogenase</fullName>
        <shortName evidence="1">SGSD</shortName>
    </alternativeName>
</protein>
<name>ASTD_SHIDS</name>
<keyword id="KW-0056">Arginine metabolism</keyword>
<keyword id="KW-0520">NAD</keyword>
<keyword id="KW-0560">Oxidoreductase</keyword>
<keyword id="KW-1185">Reference proteome</keyword>
<gene>
    <name evidence="1" type="primary">astD</name>
    <name type="ordered locus">SDY_1531</name>
</gene>
<feature type="chain" id="PRO_0000262428" description="N-succinylglutamate 5-semialdehyde dehydrogenase">
    <location>
        <begin position="1"/>
        <end position="490"/>
    </location>
</feature>
<feature type="active site" evidence="1">
    <location>
        <position position="243"/>
    </location>
</feature>
<feature type="active site" evidence="1">
    <location>
        <position position="277"/>
    </location>
</feature>
<feature type="binding site" evidence="1">
    <location>
        <begin position="220"/>
        <end position="225"/>
    </location>
    <ligand>
        <name>NAD(+)</name>
        <dbReference type="ChEBI" id="CHEBI:57540"/>
    </ligand>
</feature>
<dbReference type="EC" id="1.2.1.71" evidence="1"/>
<dbReference type="EMBL" id="CP000034">
    <property type="protein sequence ID" value="ABB61667.1"/>
    <property type="status" value="ALT_SEQ"/>
    <property type="molecule type" value="Genomic_DNA"/>
</dbReference>
<dbReference type="RefSeq" id="YP_403158.1">
    <property type="nucleotide sequence ID" value="NC_007606.1"/>
</dbReference>
<dbReference type="SMR" id="Q32G88"/>
<dbReference type="STRING" id="300267.SDY_1531"/>
<dbReference type="EnsemblBacteria" id="ABB61667">
    <property type="protein sequence ID" value="ABB61667"/>
    <property type="gene ID" value="SDY_1531"/>
</dbReference>
<dbReference type="KEGG" id="sdy:SDY_1531"/>
<dbReference type="PATRIC" id="fig|300267.13.peg.1834"/>
<dbReference type="HOGENOM" id="CLU_005391_6_0_6"/>
<dbReference type="UniPathway" id="UPA00185">
    <property type="reaction ID" value="UER00282"/>
</dbReference>
<dbReference type="Proteomes" id="UP000002716">
    <property type="component" value="Chromosome"/>
</dbReference>
<dbReference type="GO" id="GO:0043824">
    <property type="term" value="F:succinylglutamate-semialdehyde dehydrogenase activity"/>
    <property type="evidence" value="ECO:0007669"/>
    <property type="project" value="UniProtKB-EC"/>
</dbReference>
<dbReference type="GO" id="GO:0019544">
    <property type="term" value="P:arginine catabolic process to glutamate"/>
    <property type="evidence" value="ECO:0007669"/>
    <property type="project" value="UniProtKB-UniRule"/>
</dbReference>
<dbReference type="GO" id="GO:0019545">
    <property type="term" value="P:arginine catabolic process to succinate"/>
    <property type="evidence" value="ECO:0007669"/>
    <property type="project" value="UniProtKB-UniRule"/>
</dbReference>
<dbReference type="CDD" id="cd07095">
    <property type="entry name" value="ALDH_SGSD_AstD"/>
    <property type="match status" value="1"/>
</dbReference>
<dbReference type="FunFam" id="3.40.309.10:FF:000013">
    <property type="entry name" value="N-succinylglutamate 5-semialdehyde dehydrogenase"/>
    <property type="match status" value="1"/>
</dbReference>
<dbReference type="FunFam" id="3.40.605.10:FF:000010">
    <property type="entry name" value="N-succinylglutamate 5-semialdehyde dehydrogenase"/>
    <property type="match status" value="1"/>
</dbReference>
<dbReference type="Gene3D" id="3.40.605.10">
    <property type="entry name" value="Aldehyde Dehydrogenase, Chain A, domain 1"/>
    <property type="match status" value="1"/>
</dbReference>
<dbReference type="Gene3D" id="3.40.309.10">
    <property type="entry name" value="Aldehyde Dehydrogenase, Chain A, domain 2"/>
    <property type="match status" value="1"/>
</dbReference>
<dbReference type="HAMAP" id="MF_01174">
    <property type="entry name" value="Aldedh_AstD"/>
    <property type="match status" value="1"/>
</dbReference>
<dbReference type="InterPro" id="IPR016161">
    <property type="entry name" value="Ald_DH/histidinol_DH"/>
</dbReference>
<dbReference type="InterPro" id="IPR016163">
    <property type="entry name" value="Ald_DH_C"/>
</dbReference>
<dbReference type="InterPro" id="IPR016160">
    <property type="entry name" value="Ald_DH_CS_CYS"/>
</dbReference>
<dbReference type="InterPro" id="IPR029510">
    <property type="entry name" value="Ald_DH_CS_GLU"/>
</dbReference>
<dbReference type="InterPro" id="IPR016162">
    <property type="entry name" value="Ald_DH_N"/>
</dbReference>
<dbReference type="InterPro" id="IPR015590">
    <property type="entry name" value="Aldehyde_DH_dom"/>
</dbReference>
<dbReference type="InterPro" id="IPR017649">
    <property type="entry name" value="SuccinylGlu_semiald_DH_AstD"/>
</dbReference>
<dbReference type="NCBIfam" id="TIGR03240">
    <property type="entry name" value="arg_catab_astD"/>
    <property type="match status" value="1"/>
</dbReference>
<dbReference type="NCBIfam" id="NF006992">
    <property type="entry name" value="PRK09457.1"/>
    <property type="match status" value="1"/>
</dbReference>
<dbReference type="PANTHER" id="PTHR11699">
    <property type="entry name" value="ALDEHYDE DEHYDROGENASE-RELATED"/>
    <property type="match status" value="1"/>
</dbReference>
<dbReference type="Pfam" id="PF00171">
    <property type="entry name" value="Aldedh"/>
    <property type="match status" value="1"/>
</dbReference>
<dbReference type="SUPFAM" id="SSF53720">
    <property type="entry name" value="ALDH-like"/>
    <property type="match status" value="1"/>
</dbReference>
<dbReference type="PROSITE" id="PS00070">
    <property type="entry name" value="ALDEHYDE_DEHYDR_CYS"/>
    <property type="match status" value="1"/>
</dbReference>
<dbReference type="PROSITE" id="PS00687">
    <property type="entry name" value="ALDEHYDE_DEHYDR_GLU"/>
    <property type="match status" value="1"/>
</dbReference>